<dbReference type="EMBL" id="CR860910">
    <property type="protein sequence ID" value="CAH93015.1"/>
    <property type="molecule type" value="mRNA"/>
</dbReference>
<dbReference type="RefSeq" id="NP_001126781.1">
    <property type="nucleotide sequence ID" value="NM_001133309.1"/>
</dbReference>
<dbReference type="SMR" id="Q5R5F1"/>
<dbReference type="FunCoup" id="Q5R5F1">
    <property type="interactions" value="4627"/>
</dbReference>
<dbReference type="STRING" id="9601.ENSPPYP00000001054"/>
<dbReference type="GeneID" id="100440626"/>
<dbReference type="KEGG" id="pon:100440626"/>
<dbReference type="CTD" id="9129"/>
<dbReference type="eggNOG" id="KOG2769">
    <property type="taxonomic scope" value="Eukaryota"/>
</dbReference>
<dbReference type="InParanoid" id="Q5R5F1"/>
<dbReference type="OrthoDB" id="10264544at2759"/>
<dbReference type="Proteomes" id="UP000001595">
    <property type="component" value="Unplaced"/>
</dbReference>
<dbReference type="GO" id="GO:0016607">
    <property type="term" value="C:nuclear speck"/>
    <property type="evidence" value="ECO:0007669"/>
    <property type="project" value="UniProtKB-SubCell"/>
</dbReference>
<dbReference type="GO" id="GO:0005634">
    <property type="term" value="C:nucleus"/>
    <property type="evidence" value="ECO:0000250"/>
    <property type="project" value="UniProtKB"/>
</dbReference>
<dbReference type="GO" id="GO:0005681">
    <property type="term" value="C:spliceosomal complex"/>
    <property type="evidence" value="ECO:0007669"/>
    <property type="project" value="UniProtKB-KW"/>
</dbReference>
<dbReference type="GO" id="GO:0046540">
    <property type="term" value="C:U4/U6 x U5 tri-snRNP complex"/>
    <property type="evidence" value="ECO:0000250"/>
    <property type="project" value="UniProtKB"/>
</dbReference>
<dbReference type="GO" id="GO:0000398">
    <property type="term" value="P:mRNA splicing, via spliceosome"/>
    <property type="evidence" value="ECO:0000250"/>
    <property type="project" value="UniProtKB"/>
</dbReference>
<dbReference type="GO" id="GO:0000244">
    <property type="term" value="P:spliceosomal tri-snRNP complex assembly"/>
    <property type="evidence" value="ECO:0000250"/>
    <property type="project" value="UniProtKB"/>
</dbReference>
<dbReference type="CDD" id="cd24162">
    <property type="entry name" value="Prp3_C"/>
    <property type="match status" value="1"/>
</dbReference>
<dbReference type="FunFam" id="1.20.1390.10:FF:000003">
    <property type="entry name" value="U4/U6 small nuclear ribonucleoprotein Prp3"/>
    <property type="match status" value="1"/>
</dbReference>
<dbReference type="Gene3D" id="1.20.1390.10">
    <property type="entry name" value="PWI domain"/>
    <property type="match status" value="1"/>
</dbReference>
<dbReference type="InterPro" id="IPR013881">
    <property type="entry name" value="Pre-mRNA_splic_Prp3_dom"/>
</dbReference>
<dbReference type="InterPro" id="IPR027104">
    <property type="entry name" value="Prp3"/>
</dbReference>
<dbReference type="InterPro" id="IPR010541">
    <property type="entry name" value="Prp3_C"/>
</dbReference>
<dbReference type="InterPro" id="IPR002483">
    <property type="entry name" value="PWI_dom"/>
</dbReference>
<dbReference type="InterPro" id="IPR036483">
    <property type="entry name" value="PWI_dom_sf"/>
</dbReference>
<dbReference type="PANTHER" id="PTHR14212">
    <property type="entry name" value="U4/U6-ASSOCIATED RNA SPLICING FACTOR-RELATED"/>
    <property type="match status" value="1"/>
</dbReference>
<dbReference type="PANTHER" id="PTHR14212:SF0">
    <property type="entry name" value="U4_U6 SMALL NUCLEAR RIBONUCLEOPROTEIN PRP3"/>
    <property type="match status" value="1"/>
</dbReference>
<dbReference type="Pfam" id="PF08572">
    <property type="entry name" value="PRP3"/>
    <property type="match status" value="1"/>
</dbReference>
<dbReference type="Pfam" id="PF06544">
    <property type="entry name" value="Prp3_C"/>
    <property type="match status" value="1"/>
</dbReference>
<dbReference type="Pfam" id="PF01480">
    <property type="entry name" value="PWI"/>
    <property type="match status" value="1"/>
</dbReference>
<dbReference type="SMART" id="SM00311">
    <property type="entry name" value="PWI"/>
    <property type="match status" value="1"/>
</dbReference>
<dbReference type="SUPFAM" id="SSF101233">
    <property type="entry name" value="PWI domain"/>
    <property type="match status" value="1"/>
</dbReference>
<dbReference type="PROSITE" id="PS51025">
    <property type="entry name" value="PWI"/>
    <property type="match status" value="1"/>
</dbReference>
<name>PRPF3_PONAB</name>
<sequence length="683" mass="77557">MALSKRELDELKPWIEKTVKRVLGFSEPTVVTAALNCVGKGMDKKKAADHLKPFLDDSTLRFVDKLFEAVEEGRSSRHSKSSSDRSRKRELKEVFGDDSEISKESSGVKKRRIPRFEEVEEEPEVIPGPPSESPGMLTKLQIKQMMEAATRQIEERKKQLSFISPPTPQPKTPSSSQPERLPIGNTIQPSQAATFMNDAIEKARKAAELQARIQAQLALKPGLIGNANMVGLANLHAMGIAPPKVELKDQTKPTPLILDEQGRTVDATGKEIELTHRMPTLKANIRAVKREQFRQQLKEKPSEDMESNTFFDPRVSIAPSQRQRRTFKFHDKGKFEKIAQRLRTKAQLEKLQAEISQAARKTGIHTSTRLALIAPKKELKEGDIPEIEWWDSYIIPNGFDLTEENPKREDYFGITNLVEHPAQLNPPVDNDTPVTLGVYLTKKEQKKLRRQTRREAQKELQEKVRLGLMPPPEPKVRISNLMRVLGTEAVQDPTKVEAHVRAQMAKRQKAHEEANAARKLTAEQRKVKKIKKLKEDISQGVHISVYRVRNLSNPAKKFKIEANAGQLYLTGVVVLHKDVNVVVVEGGPKAQKKFKRLMLHRIKWDEQTSNTKGDDDEESDEEAVKKTNKCVLVWEGTAKDRSFGEMKFKQCPTENMAREHFKKHGAEHYWDLALSESVLESTD</sequence>
<keyword id="KW-1017">Isopeptide bond</keyword>
<keyword id="KW-0507">mRNA processing</keyword>
<keyword id="KW-0508">mRNA splicing</keyword>
<keyword id="KW-0539">Nucleus</keyword>
<keyword id="KW-0597">Phosphoprotein</keyword>
<keyword id="KW-1185">Reference proteome</keyword>
<keyword id="KW-0747">Spliceosome</keyword>
<keyword id="KW-0832">Ubl conjugation</keyword>
<evidence type="ECO:0000250" key="1">
    <source>
        <dbReference type="UniProtKB" id="O43395"/>
    </source>
</evidence>
<evidence type="ECO:0000255" key="2">
    <source>
        <dbReference type="PROSITE-ProRule" id="PRU00627"/>
    </source>
</evidence>
<evidence type="ECO:0000256" key="3">
    <source>
        <dbReference type="SAM" id="MobiDB-lite"/>
    </source>
</evidence>
<organism>
    <name type="scientific">Pongo abelii</name>
    <name type="common">Sumatran orangutan</name>
    <name type="synonym">Pongo pygmaeus abelii</name>
    <dbReference type="NCBI Taxonomy" id="9601"/>
    <lineage>
        <taxon>Eukaryota</taxon>
        <taxon>Metazoa</taxon>
        <taxon>Chordata</taxon>
        <taxon>Craniata</taxon>
        <taxon>Vertebrata</taxon>
        <taxon>Euteleostomi</taxon>
        <taxon>Mammalia</taxon>
        <taxon>Eutheria</taxon>
        <taxon>Euarchontoglires</taxon>
        <taxon>Primates</taxon>
        <taxon>Haplorrhini</taxon>
        <taxon>Catarrhini</taxon>
        <taxon>Hominidae</taxon>
        <taxon>Pongo</taxon>
    </lineage>
</organism>
<proteinExistence type="evidence at transcript level"/>
<gene>
    <name type="primary">PRPF3</name>
</gene>
<accession>Q5R5F1</accession>
<protein>
    <recommendedName>
        <fullName>U4/U6 small nuclear ribonucleoprotein Prp3</fullName>
    </recommendedName>
    <alternativeName>
        <fullName>Pre-mRNA-splicing factor 3</fullName>
    </alternativeName>
</protein>
<comment type="function">
    <text evidence="1">Plays a role in pre-mRNA splicing as component of the U4/U6-U5 tri-snRNP complex that is involved in spliceosome assembly, and as component of the precatalytic spliceosome (spliceosome B complex).</text>
</comment>
<comment type="subunit">
    <text evidence="1">Component of the precatalytic spliceosome (spliceosome B complex) (By similarity). Component of the U4/U6-U5 tri-snRNP complex, a building block of the precatalytic spliceosome (spliceosome B complex) (By similarity). The U4/U6-U5 tri-snRNP complex is composed of the U4, U6 and U5 snRNAs and at least PRPF3, PRPF4, PRPF6, PRPF8, PRPF31, SNRNP200, TXNL4A, SNRNP40, SNRPB, SNRPD1, SNRPD2, SNRPD3, SNRPE, SNRPF, SNRPG, DDX23, CD2BP2, PPIH, SNU13, EFTUD2, SART1 and USP39, plus LSM2, LSM3, LSM4, LSM5, LSM6, LSM7 and LSM8 (By similarity). Interacts directly with PRPF4 (By similarity). Part of a heteromeric complex containing PPIH, PRPF3 and PRPF4 that is stable in the absence of RNA (By similarity). Interacts with SART3; the interaction is direct and recruits the deubiquitinase USP4 to PRPF3 (By similarity). Interacts with PRPF19 (By similarity). Interacts ('Lys-63'-linked polyubiquitinated) with PRPF8 (via the MPN (JAB/Mov34) domain); may stabilize the U4/U6-U5 tri-snRNP complex (By similarity). Interacts with ERCC6 (By similarity).</text>
</comment>
<comment type="subcellular location">
    <subcellularLocation>
        <location evidence="1">Nucleus</location>
    </subcellularLocation>
    <subcellularLocation>
        <location evidence="2">Nucleus speckle</location>
    </subcellularLocation>
</comment>
<comment type="PTM">
    <text evidence="1">Ubiquitinated. Undergoes 'Lys-63'-linked polyubiquitination by PRPF19 and deubiquitination by USP4. 'Lys-63'-linked ubiquitination increases the affinity for PRPF8 and may regulate the assembly of the U4/U6-U5 tri-snRNP complex.</text>
</comment>
<reference key="1">
    <citation type="submission" date="2004-11" db="EMBL/GenBank/DDBJ databases">
        <authorList>
            <consortium name="The German cDNA consortium"/>
        </authorList>
    </citation>
    <scope>NUCLEOTIDE SEQUENCE [LARGE SCALE MRNA]</scope>
    <source>
        <tissue>Kidney</tissue>
    </source>
</reference>
<feature type="chain" id="PRO_0000312363" description="U4/U6 small nuclear ribonucleoprotein Prp3">
    <location>
        <begin position="1"/>
        <end position="683"/>
    </location>
</feature>
<feature type="domain" description="PWI" evidence="2">
    <location>
        <begin position="1"/>
        <end position="87"/>
    </location>
</feature>
<feature type="region of interest" description="Disordered" evidence="3">
    <location>
        <begin position="73"/>
        <end position="135"/>
    </location>
</feature>
<feature type="region of interest" description="Disordered" evidence="3">
    <location>
        <begin position="153"/>
        <end position="183"/>
    </location>
</feature>
<feature type="region of interest" description="Mediates interaction with SART3" evidence="1">
    <location>
        <begin position="416"/>
        <end position="550"/>
    </location>
</feature>
<feature type="compositionally biased region" description="Basic and acidic residues" evidence="3">
    <location>
        <begin position="73"/>
        <end position="107"/>
    </location>
</feature>
<feature type="modified residue" description="Phosphoserine" evidence="1">
    <location>
        <position position="164"/>
    </location>
</feature>
<feature type="modified residue" description="Phosphothreonine" evidence="1">
    <location>
        <position position="167"/>
    </location>
</feature>
<feature type="modified residue" description="Phosphoserine" evidence="1">
    <location>
        <position position="619"/>
    </location>
</feature>
<feature type="cross-link" description="Glycyl lysine isopeptide (Lys-Gly) (interchain with G-Cter in SUMO2)" evidence="1">
    <location>
        <position position="139"/>
    </location>
</feature>
<feature type="cross-link" description="Glycyl lysine isopeptide (Lys-Gly) (interchain with G-Cter in SUMO2)" evidence="1">
    <location>
        <position position="244"/>
    </location>
</feature>
<feature type="cross-link" description="Glycyl lysine isopeptide (Lys-Gly) (interchain with G-Cter in SUMO2)" evidence="1">
    <location>
        <position position="252"/>
    </location>
</feature>